<evidence type="ECO:0000255" key="1">
    <source>
        <dbReference type="HAMAP-Rule" id="MF_01867"/>
    </source>
</evidence>
<gene>
    <name evidence="1" type="primary">bshC</name>
    <name type="ordered locus">SH1738</name>
</gene>
<dbReference type="EC" id="6.-.-.-" evidence="1"/>
<dbReference type="EMBL" id="AP006716">
    <property type="protein sequence ID" value="BAE05047.1"/>
    <property type="molecule type" value="Genomic_DNA"/>
</dbReference>
<dbReference type="RefSeq" id="WP_011276023.1">
    <property type="nucleotide sequence ID" value="NC_007168.1"/>
</dbReference>
<dbReference type="SMR" id="Q4L5M8"/>
<dbReference type="KEGG" id="sha:SH1738"/>
<dbReference type="eggNOG" id="COG4365">
    <property type="taxonomic scope" value="Bacteria"/>
</dbReference>
<dbReference type="HOGENOM" id="CLU_022249_1_0_9"/>
<dbReference type="OrthoDB" id="9765151at2"/>
<dbReference type="Proteomes" id="UP000000543">
    <property type="component" value="Chromosome"/>
</dbReference>
<dbReference type="GO" id="GO:0016874">
    <property type="term" value="F:ligase activity"/>
    <property type="evidence" value="ECO:0007669"/>
    <property type="project" value="UniProtKB-UniRule"/>
</dbReference>
<dbReference type="HAMAP" id="MF_01867">
    <property type="entry name" value="BshC"/>
    <property type="match status" value="1"/>
</dbReference>
<dbReference type="InterPro" id="IPR011199">
    <property type="entry name" value="Bacillithiol_biosynth_BshC"/>
</dbReference>
<dbReference type="InterPro" id="IPR055399">
    <property type="entry name" value="CC_BshC"/>
</dbReference>
<dbReference type="InterPro" id="IPR055398">
    <property type="entry name" value="Rossmann-like_BshC"/>
</dbReference>
<dbReference type="NCBIfam" id="TIGR03998">
    <property type="entry name" value="thiol_BshC"/>
    <property type="match status" value="1"/>
</dbReference>
<dbReference type="Pfam" id="PF24850">
    <property type="entry name" value="CC_BshC"/>
    <property type="match status" value="1"/>
</dbReference>
<dbReference type="Pfam" id="PF10079">
    <property type="entry name" value="Rossmann-like_BshC"/>
    <property type="match status" value="1"/>
</dbReference>
<dbReference type="PIRSF" id="PIRSF012535">
    <property type="entry name" value="UCP012535"/>
    <property type="match status" value="1"/>
</dbReference>
<protein>
    <recommendedName>
        <fullName evidence="1">Putative cysteine ligase BshC</fullName>
        <ecNumber evidence="1">6.-.-.-</ecNumber>
    </recommendedName>
</protein>
<comment type="function">
    <text evidence="1">Involved in bacillithiol (BSH) biosynthesis. May catalyze the last step of the pathway, the addition of cysteine to glucosamine malate (GlcN-Mal) to generate BSH.</text>
</comment>
<comment type="similarity">
    <text evidence="1">Belongs to the BshC family.</text>
</comment>
<organism>
    <name type="scientific">Staphylococcus haemolyticus (strain JCSC1435)</name>
    <dbReference type="NCBI Taxonomy" id="279808"/>
    <lineage>
        <taxon>Bacteria</taxon>
        <taxon>Bacillati</taxon>
        <taxon>Bacillota</taxon>
        <taxon>Bacilli</taxon>
        <taxon>Bacillales</taxon>
        <taxon>Staphylococcaceae</taxon>
        <taxon>Staphylococcus</taxon>
    </lineage>
</organism>
<name>BSHC_STAHJ</name>
<accession>Q4L5M8</accession>
<feature type="chain" id="PRO_0000378269" description="Putative cysteine ligase BshC">
    <location>
        <begin position="1"/>
        <end position="537"/>
    </location>
</feature>
<feature type="coiled-coil region" evidence="1">
    <location>
        <begin position="383"/>
        <end position="451"/>
    </location>
</feature>
<proteinExistence type="inferred from homology"/>
<keyword id="KW-0175">Coiled coil</keyword>
<keyword id="KW-0436">Ligase</keyword>
<sequence>MDCRVTHFKEKDSFISKLKESDKSLLEFYQYNPVETASFTTKMKRPNNGREKQLAQIIKDYMADLKLTTSQLEHIEALEQGAKVVIGGQQAGLFGGPLYTFHKILSIVTLSSQLTKEYGETVVPVFWIAGEDHDFDEVNHTYVYNAKEAQLKKVKYHTMTPPETNVSRYTPDKEAMLNALNLFFEELKETNHSKPLYKLCVDIINEFDTWTDIFKALLHAVFKEHGVLLIDAQNDKLRQLEKPLLKQIVTNHSKINQVFRQTQEQTIASGLTQMIQTDTNVHLFLHEDGMRQLISKEDNLFKLSKSDITYSEEELIELIETEPERFSNNVVTRPVMEEWLFNTVAFIGGPSEIKYWAELNNVFKLLNVEMPIVLPRMKMTYMMERTQKLLKQYSLNVEKVIQNGIDDDKNEFVREKASDTFIQQVEELKAKHENVYQQLLNEVKENQDNFNLVTKNEEIHNKQFDYLLKRYLLNIERENDISMRQFRELDLVLHPHHGLQERIWNPLQIMNDFGIDVFSPSTFPPLEYTFDQIIIKP</sequence>
<reference key="1">
    <citation type="journal article" date="2005" name="J. Bacteriol.">
        <title>Whole-genome sequencing of Staphylococcus haemolyticus uncovers the extreme plasticity of its genome and the evolution of human-colonizing staphylococcal species.</title>
        <authorList>
            <person name="Takeuchi F."/>
            <person name="Watanabe S."/>
            <person name="Baba T."/>
            <person name="Yuzawa H."/>
            <person name="Ito T."/>
            <person name="Morimoto Y."/>
            <person name="Kuroda M."/>
            <person name="Cui L."/>
            <person name="Takahashi M."/>
            <person name="Ankai A."/>
            <person name="Baba S."/>
            <person name="Fukui S."/>
            <person name="Lee J.C."/>
            <person name="Hiramatsu K."/>
        </authorList>
    </citation>
    <scope>NUCLEOTIDE SEQUENCE [LARGE SCALE GENOMIC DNA]</scope>
    <source>
        <strain>JCSC1435</strain>
    </source>
</reference>